<accession>Q4UP08</accession>
<dbReference type="EC" id="6.1.1.14" evidence="1"/>
<dbReference type="EMBL" id="CP000050">
    <property type="protein sequence ID" value="AAY51215.1"/>
    <property type="molecule type" value="Genomic_DNA"/>
</dbReference>
<dbReference type="RefSeq" id="WP_011039155.1">
    <property type="nucleotide sequence ID" value="NZ_CP155948.1"/>
</dbReference>
<dbReference type="SMR" id="Q4UP08"/>
<dbReference type="KEGG" id="xcb:XC_4177"/>
<dbReference type="HOGENOM" id="CLU_007220_2_2_6"/>
<dbReference type="Proteomes" id="UP000000420">
    <property type="component" value="Chromosome"/>
</dbReference>
<dbReference type="GO" id="GO:0005829">
    <property type="term" value="C:cytosol"/>
    <property type="evidence" value="ECO:0007669"/>
    <property type="project" value="TreeGrafter"/>
</dbReference>
<dbReference type="GO" id="GO:0004814">
    <property type="term" value="F:arginine-tRNA ligase activity"/>
    <property type="evidence" value="ECO:0007669"/>
    <property type="project" value="InterPro"/>
</dbReference>
<dbReference type="GO" id="GO:0005524">
    <property type="term" value="F:ATP binding"/>
    <property type="evidence" value="ECO:0007669"/>
    <property type="project" value="UniProtKB-UniRule"/>
</dbReference>
<dbReference type="GO" id="GO:0004820">
    <property type="term" value="F:glycine-tRNA ligase activity"/>
    <property type="evidence" value="ECO:0007669"/>
    <property type="project" value="UniProtKB-UniRule"/>
</dbReference>
<dbReference type="GO" id="GO:0006420">
    <property type="term" value="P:arginyl-tRNA aminoacylation"/>
    <property type="evidence" value="ECO:0007669"/>
    <property type="project" value="InterPro"/>
</dbReference>
<dbReference type="GO" id="GO:0006426">
    <property type="term" value="P:glycyl-tRNA aminoacylation"/>
    <property type="evidence" value="ECO:0007669"/>
    <property type="project" value="UniProtKB-UniRule"/>
</dbReference>
<dbReference type="HAMAP" id="MF_00255">
    <property type="entry name" value="Gly_tRNA_synth_beta"/>
    <property type="match status" value="1"/>
</dbReference>
<dbReference type="InterPro" id="IPR008909">
    <property type="entry name" value="DALR_anticod-bd"/>
</dbReference>
<dbReference type="InterPro" id="IPR015944">
    <property type="entry name" value="Gly-tRNA-synth_bsu"/>
</dbReference>
<dbReference type="InterPro" id="IPR006194">
    <property type="entry name" value="Gly-tRNA-synth_heterodimer"/>
</dbReference>
<dbReference type="NCBIfam" id="TIGR00211">
    <property type="entry name" value="glyS"/>
    <property type="match status" value="1"/>
</dbReference>
<dbReference type="PANTHER" id="PTHR30075:SF2">
    <property type="entry name" value="GLYCINE--TRNA LIGASE, CHLOROPLASTIC_MITOCHONDRIAL 2"/>
    <property type="match status" value="1"/>
</dbReference>
<dbReference type="PANTHER" id="PTHR30075">
    <property type="entry name" value="GLYCYL-TRNA SYNTHETASE"/>
    <property type="match status" value="1"/>
</dbReference>
<dbReference type="Pfam" id="PF05746">
    <property type="entry name" value="DALR_1"/>
    <property type="match status" value="1"/>
</dbReference>
<dbReference type="Pfam" id="PF02092">
    <property type="entry name" value="tRNA_synt_2f"/>
    <property type="match status" value="1"/>
</dbReference>
<dbReference type="PRINTS" id="PR01045">
    <property type="entry name" value="TRNASYNTHGB"/>
</dbReference>
<dbReference type="SMART" id="SM00836">
    <property type="entry name" value="DALR_1"/>
    <property type="match status" value="1"/>
</dbReference>
<dbReference type="SUPFAM" id="SSF109604">
    <property type="entry name" value="HD-domain/PDEase-like"/>
    <property type="match status" value="1"/>
</dbReference>
<dbReference type="PROSITE" id="PS50861">
    <property type="entry name" value="AA_TRNA_LIGASE_II_GLYAB"/>
    <property type="match status" value="1"/>
</dbReference>
<protein>
    <recommendedName>
        <fullName evidence="1">Glycine--tRNA ligase beta subunit</fullName>
        <ecNumber evidence="1">6.1.1.14</ecNumber>
    </recommendedName>
    <alternativeName>
        <fullName evidence="1">Glycyl-tRNA synthetase beta subunit</fullName>
        <shortName evidence="1">GlyRS</shortName>
    </alternativeName>
</protein>
<comment type="catalytic activity">
    <reaction evidence="1">
        <text>tRNA(Gly) + glycine + ATP = glycyl-tRNA(Gly) + AMP + diphosphate</text>
        <dbReference type="Rhea" id="RHEA:16013"/>
        <dbReference type="Rhea" id="RHEA-COMP:9664"/>
        <dbReference type="Rhea" id="RHEA-COMP:9683"/>
        <dbReference type="ChEBI" id="CHEBI:30616"/>
        <dbReference type="ChEBI" id="CHEBI:33019"/>
        <dbReference type="ChEBI" id="CHEBI:57305"/>
        <dbReference type="ChEBI" id="CHEBI:78442"/>
        <dbReference type="ChEBI" id="CHEBI:78522"/>
        <dbReference type="ChEBI" id="CHEBI:456215"/>
        <dbReference type="EC" id="6.1.1.14"/>
    </reaction>
</comment>
<comment type="subunit">
    <text evidence="1">Tetramer of two alpha and two beta subunits.</text>
</comment>
<comment type="subcellular location">
    <subcellularLocation>
        <location evidence="1">Cytoplasm</location>
    </subcellularLocation>
</comment>
<comment type="similarity">
    <text evidence="1">Belongs to the class-II aminoacyl-tRNA synthetase family.</text>
</comment>
<reference key="1">
    <citation type="journal article" date="2005" name="Genome Res.">
        <title>Comparative and functional genomic analyses of the pathogenicity of phytopathogen Xanthomonas campestris pv. campestris.</title>
        <authorList>
            <person name="Qian W."/>
            <person name="Jia Y."/>
            <person name="Ren S.-X."/>
            <person name="He Y.-Q."/>
            <person name="Feng J.-X."/>
            <person name="Lu L.-F."/>
            <person name="Sun Q."/>
            <person name="Ying G."/>
            <person name="Tang D.-J."/>
            <person name="Tang H."/>
            <person name="Wu W."/>
            <person name="Hao P."/>
            <person name="Wang L."/>
            <person name="Jiang B.-L."/>
            <person name="Zeng S."/>
            <person name="Gu W.-Y."/>
            <person name="Lu G."/>
            <person name="Rong L."/>
            <person name="Tian Y."/>
            <person name="Yao Z."/>
            <person name="Fu G."/>
            <person name="Chen B."/>
            <person name="Fang R."/>
            <person name="Qiang B."/>
            <person name="Chen Z."/>
            <person name="Zhao G.-P."/>
            <person name="Tang J.-L."/>
            <person name="He C."/>
        </authorList>
    </citation>
    <scope>NUCLEOTIDE SEQUENCE [LARGE SCALE GENOMIC DNA]</scope>
    <source>
        <strain>8004</strain>
    </source>
</reference>
<proteinExistence type="inferred from homology"/>
<keyword id="KW-0030">Aminoacyl-tRNA synthetase</keyword>
<keyword id="KW-0067">ATP-binding</keyword>
<keyword id="KW-0963">Cytoplasm</keyword>
<keyword id="KW-0436">Ligase</keyword>
<keyword id="KW-0547">Nucleotide-binding</keyword>
<keyword id="KW-0648">Protein biosynthesis</keyword>
<name>SYGB_XANC8</name>
<feature type="chain" id="PRO_1000006421" description="Glycine--tRNA ligase beta subunit">
    <location>
        <begin position="1"/>
        <end position="698"/>
    </location>
</feature>
<gene>
    <name evidence="1" type="primary">glyS</name>
    <name type="ordered locus">XC_4177</name>
</gene>
<organism>
    <name type="scientific">Xanthomonas campestris pv. campestris (strain 8004)</name>
    <dbReference type="NCBI Taxonomy" id="314565"/>
    <lineage>
        <taxon>Bacteria</taxon>
        <taxon>Pseudomonadati</taxon>
        <taxon>Pseudomonadota</taxon>
        <taxon>Gammaproteobacteria</taxon>
        <taxon>Lysobacterales</taxon>
        <taxon>Lysobacteraceae</taxon>
        <taxon>Xanthomonas</taxon>
    </lineage>
</organism>
<evidence type="ECO:0000255" key="1">
    <source>
        <dbReference type="HAMAP-Rule" id="MF_00255"/>
    </source>
</evidence>
<sequence>MSEQLPLLIELGTEELPVKALPGLAQAFFDGVLAGLEKRGVAVTRGDAKPLSTPRRLAVLLPGVATEQPEQRSEVLGPYLNIALDAEGKPTRALAGFAAKAGIDWTALERTSDAKGERFVHRAVTPGAQAAALLPEILREAIAAMPIPKPMRWGAHEYAFARPVQWLVLLFGDTVIPAELLGVRGDRITRGHRFMHDGDIALAAPGDYIDALRAAHVLVDADARRARIVEEVDAAARQAGGSARISDDNLEQVVNLVEWPSAVLCSFERAFLAVPQEALIETMEINQKFFPVLDDGGKLTEQFIGIANIVSKDVAEVAKGYERVIRPRFADAKFFFDEDLKQGLEAMGAGLASVTYQAKLGTVADKVARVAALAEAIAPQVGADPVQARRAAELAKNDLQSRMVNEFPELQGIAGRHYAKAAGEPSEISLAIDEAYQPRFAGDDIALSPLGKVLAIAERLDTLAGGFAAGLKPTGNKDPFALRRNALGLARTVIESGFDLDLPKLIDVGLASLPDAVKPHADRNTETVRADLYDFILDRLKGYYADKGVAATHFNAVAELKPASLYDFDRRIDAIGIFATLPEAEALAAANKRIRNILRKVEGEIPGDIDTTLLREPAEEALAEAVEAAIGDTGDALHRHDYVAVLARLARLRPQVDAFFDGVMVNADDPQLRANRLALLKKLGDRLGSVAAIEHLSS</sequence>